<keyword id="KW-0148">Chlorophyll</keyword>
<keyword id="KW-0150">Chloroplast</keyword>
<keyword id="KW-0157">Chromophore</keyword>
<keyword id="KW-0903">Direct protein sequencing</keyword>
<keyword id="KW-0460">Magnesium</keyword>
<keyword id="KW-0472">Membrane</keyword>
<keyword id="KW-0479">Metal-binding</keyword>
<keyword id="KW-0597">Phosphoprotein</keyword>
<keyword id="KW-0602">Photosynthesis</keyword>
<keyword id="KW-0603">Photosystem I</keyword>
<keyword id="KW-0604">Photosystem II</keyword>
<keyword id="KW-0934">Plastid</keyword>
<keyword id="KW-1185">Reference proteome</keyword>
<keyword id="KW-0793">Thylakoid</keyword>
<keyword id="KW-0809">Transit peptide</keyword>
<keyword id="KW-0812">Transmembrane</keyword>
<keyword id="KW-1133">Transmembrane helix</keyword>
<accession>P27489</accession>
<organism>
    <name type="scientific">Solanum lycopersicum</name>
    <name type="common">Tomato</name>
    <name type="synonym">Lycopersicon esculentum</name>
    <dbReference type="NCBI Taxonomy" id="4081"/>
    <lineage>
        <taxon>Eukaryota</taxon>
        <taxon>Viridiplantae</taxon>
        <taxon>Streptophyta</taxon>
        <taxon>Embryophyta</taxon>
        <taxon>Tracheophyta</taxon>
        <taxon>Spermatophyta</taxon>
        <taxon>Magnoliopsida</taxon>
        <taxon>eudicotyledons</taxon>
        <taxon>Gunneridae</taxon>
        <taxon>Pentapetalae</taxon>
        <taxon>asterids</taxon>
        <taxon>lamiids</taxon>
        <taxon>Solanales</taxon>
        <taxon>Solanaceae</taxon>
        <taxon>Solanoideae</taxon>
        <taxon>Solaneae</taxon>
        <taxon>Solanum</taxon>
        <taxon>Solanum subgen. Lycopersicon</taxon>
    </lineage>
</organism>
<evidence type="ECO:0000250" key="1"/>
<evidence type="ECO:0000250" key="2">
    <source>
        <dbReference type="UniProtKB" id="P07371"/>
    </source>
</evidence>
<evidence type="ECO:0000250" key="3">
    <source>
        <dbReference type="UniProtKB" id="P12333"/>
    </source>
</evidence>
<evidence type="ECO:0000255" key="4"/>
<evidence type="ECO:0000269" key="5">
    <source>
    </source>
</evidence>
<evidence type="ECO:0000305" key="6"/>
<gene>
    <name type="primary">CAB13</name>
    <name type="synonym">LHBC1</name>
</gene>
<name>CB23_SOLLC</name>
<dbReference type="EMBL" id="X60275">
    <property type="protein sequence ID" value="CAA42818.1"/>
    <property type="molecule type" value="Genomic_DNA"/>
</dbReference>
<dbReference type="PIR" id="S17737">
    <property type="entry name" value="CDTO33"/>
</dbReference>
<dbReference type="RefSeq" id="NP_001296244.1">
    <property type="nucleotide sequence ID" value="NM_001309315.1"/>
</dbReference>
<dbReference type="SMR" id="P27489"/>
<dbReference type="FunCoup" id="P27489">
    <property type="interactions" value="978"/>
</dbReference>
<dbReference type="STRING" id="4081.P27489"/>
<dbReference type="PaxDb" id="4081-Solyc12g011450.1.1"/>
<dbReference type="EnsemblPlants" id="Solyc12g011450.2.1">
    <property type="protein sequence ID" value="Solyc12g011450.2.1"/>
    <property type="gene ID" value="Solyc12g011450.2"/>
</dbReference>
<dbReference type="GeneID" id="101243766"/>
<dbReference type="Gramene" id="Solyc12g011450.2.1">
    <property type="protein sequence ID" value="Solyc12g011450.2.1"/>
    <property type="gene ID" value="Solyc12g011450.2"/>
</dbReference>
<dbReference type="KEGG" id="sly:101243766"/>
<dbReference type="eggNOG" id="ENOG502QQ3N">
    <property type="taxonomic scope" value="Eukaryota"/>
</dbReference>
<dbReference type="HOGENOM" id="CLU_057943_2_0_1"/>
<dbReference type="InParanoid" id="P27489"/>
<dbReference type="OMA" id="SMGPGKY"/>
<dbReference type="OrthoDB" id="423598at2759"/>
<dbReference type="PhylomeDB" id="P27489"/>
<dbReference type="Proteomes" id="UP000004994">
    <property type="component" value="Chromosome 12"/>
</dbReference>
<dbReference type="GO" id="GO:0009535">
    <property type="term" value="C:chloroplast thylakoid membrane"/>
    <property type="evidence" value="ECO:0000318"/>
    <property type="project" value="GO_Central"/>
</dbReference>
<dbReference type="GO" id="GO:0009522">
    <property type="term" value="C:photosystem I"/>
    <property type="evidence" value="ECO:0007669"/>
    <property type="project" value="UniProtKB-KW"/>
</dbReference>
<dbReference type="GO" id="GO:0009523">
    <property type="term" value="C:photosystem II"/>
    <property type="evidence" value="ECO:0007669"/>
    <property type="project" value="UniProtKB-KW"/>
</dbReference>
<dbReference type="GO" id="GO:0016168">
    <property type="term" value="F:chlorophyll binding"/>
    <property type="evidence" value="ECO:0007669"/>
    <property type="project" value="UniProtKB-KW"/>
</dbReference>
<dbReference type="GO" id="GO:0046872">
    <property type="term" value="F:metal ion binding"/>
    <property type="evidence" value="ECO:0007669"/>
    <property type="project" value="UniProtKB-KW"/>
</dbReference>
<dbReference type="GO" id="GO:0009768">
    <property type="term" value="P:photosynthesis, light harvesting in photosystem I"/>
    <property type="evidence" value="ECO:0000318"/>
    <property type="project" value="GO_Central"/>
</dbReference>
<dbReference type="GO" id="GO:0009416">
    <property type="term" value="P:response to light stimulus"/>
    <property type="evidence" value="ECO:0000318"/>
    <property type="project" value="GO_Central"/>
</dbReference>
<dbReference type="FunFam" id="1.10.3460.10:FF:000001">
    <property type="entry name" value="Chlorophyll a-b binding protein, chloroplastic"/>
    <property type="match status" value="1"/>
</dbReference>
<dbReference type="Gene3D" id="1.10.3460.10">
    <property type="entry name" value="Chlorophyll a/b binding protein domain"/>
    <property type="match status" value="1"/>
</dbReference>
<dbReference type="InterPro" id="IPR001344">
    <property type="entry name" value="Chloro_AB-bd_pln"/>
</dbReference>
<dbReference type="InterPro" id="IPR022796">
    <property type="entry name" value="Chloroa_b-bind"/>
</dbReference>
<dbReference type="PANTHER" id="PTHR21649">
    <property type="entry name" value="CHLOROPHYLL A/B BINDING PROTEIN"/>
    <property type="match status" value="1"/>
</dbReference>
<dbReference type="Pfam" id="PF00504">
    <property type="entry name" value="Chloroa_b-bind"/>
    <property type="match status" value="1"/>
</dbReference>
<dbReference type="SUPFAM" id="SSF103511">
    <property type="entry name" value="Chlorophyll a-b binding protein"/>
    <property type="match status" value="1"/>
</dbReference>
<comment type="function">
    <text>The light-harvesting complex (LHC) functions as a light receptor, it captures and delivers excitation energy to photosystems with which it is closely associated.</text>
</comment>
<comment type="cofactor">
    <text evidence="1">Binds at least 14 chlorophylls (8 Chl-a and 6 Chl-b) and carotenoids such as lutein and neoxanthin.</text>
</comment>
<comment type="subunit">
    <text>The LHC complex consists of chlorophyll a-b binding proteins.</text>
</comment>
<comment type="subcellular location">
    <subcellularLocation>
        <location>Plastid</location>
        <location>Chloroplast thylakoid membrane</location>
        <topology>Multi-pass membrane protein</topology>
    </subcellularLocation>
</comment>
<comment type="domain">
    <text>The N-terminus of the protein extends into the stroma where it is involved with adhesion of granal membranes and post-translational modifications; both are believed to mediate the distribution of excitation energy between photosystems I and II.</text>
</comment>
<comment type="PTM">
    <text evidence="1">Photoregulated by reversible phosphorylation of its threonine residues.</text>
</comment>
<comment type="similarity">
    <text evidence="6">Belongs to the light-harvesting chlorophyll a/b-binding (LHC) protein family.</text>
</comment>
<sequence length="265" mass="28623">MASMAATASSTTVVKATPFLGQTKNANPLRDVVAMGSARFTMSNDLWYGPDRVKYLGPFSAQTPSYLNGEFPGDYGWDTAGLSADPEAFAKNRALEVIHGRWAMLGALGCIFPEVLEKWVKVDFKEPVWFKAGSQIFSDGGLDYLGNPNLVHAQSILAVLGFQVVLMGLVEGFRINGLPGVGEGNDLYPGGQYFDPLGLADDPTTFAELKVKEIKNGRLAMFSMFGFFVQAIVTGKGPLENLLDHLDNPVANNAWVYATKFVPGA</sequence>
<proteinExistence type="evidence at protein level"/>
<feature type="transit peptide" description="Chloroplast" evidence="5">
    <location>
        <begin position="1"/>
        <end position="42"/>
    </location>
</feature>
<feature type="chain" id="PRO_0000003709" description="Chlorophyll a-b binding protein 13, chloroplastic">
    <location>
        <begin position="43"/>
        <end position="265"/>
    </location>
</feature>
<feature type="transmembrane region" description="Helical" evidence="4">
    <location>
        <begin position="95"/>
        <end position="115"/>
    </location>
</feature>
<feature type="transmembrane region" description="Helical" evidence="4">
    <location>
        <begin position="150"/>
        <end position="170"/>
    </location>
</feature>
<feature type="transmembrane region" description="Helical" evidence="4">
    <location>
        <begin position="219"/>
        <end position="239"/>
    </location>
</feature>
<feature type="binding site" description="axial binding residue" evidence="3">
    <location>
        <position position="55"/>
    </location>
    <ligand>
        <name>chlorophyll b</name>
        <dbReference type="ChEBI" id="CHEBI:61721"/>
        <label>1</label>
    </ligand>
    <ligandPart>
        <name>Mg</name>
        <dbReference type="ChEBI" id="CHEBI:25107"/>
    </ligandPart>
</feature>
<feature type="binding site" evidence="1">
    <location>
        <position position="77"/>
    </location>
    <ligand>
        <name>chlorophyll a</name>
        <dbReference type="ChEBI" id="CHEBI:58416"/>
        <label>1</label>
    </ligand>
</feature>
<feature type="binding site" evidence="1">
    <location>
        <position position="83"/>
    </location>
    <ligand>
        <name>chlorophyll a</name>
        <dbReference type="ChEBI" id="CHEBI:58416"/>
        <label>1</label>
    </ligand>
</feature>
<feature type="binding site" description="axial binding residue" evidence="3">
    <location>
        <position position="96"/>
    </location>
    <ligand>
        <name>chlorophyll a</name>
        <dbReference type="ChEBI" id="CHEBI:58416"/>
        <label>1</label>
    </ligand>
    <ligandPart>
        <name>Mg</name>
        <dbReference type="ChEBI" id="CHEBI:25107"/>
    </ligandPart>
</feature>
<feature type="binding site" description="axial binding residue" evidence="3">
    <location>
        <position position="99"/>
    </location>
    <ligand>
        <name>chlorophyll a</name>
        <dbReference type="ChEBI" id="CHEBI:58416"/>
        <label>2</label>
    </ligand>
    <ligandPart>
        <name>Mg</name>
        <dbReference type="ChEBI" id="CHEBI:25107"/>
    </ligandPart>
</feature>
<feature type="binding site" evidence="1">
    <location>
        <position position="101"/>
    </location>
    <ligand>
        <name>chlorophyll b</name>
        <dbReference type="ChEBI" id="CHEBI:61721"/>
        <label>2</label>
    </ligand>
</feature>
<feature type="binding site" evidence="1">
    <location>
        <position position="135"/>
    </location>
    <ligand>
        <name>chlorophyll a</name>
        <dbReference type="ChEBI" id="CHEBI:58416"/>
        <label>3</label>
    </ligand>
</feature>
<feature type="binding site" evidence="1">
    <location>
        <position position="145"/>
    </location>
    <ligand>
        <name>chlorophyll a</name>
        <dbReference type="ChEBI" id="CHEBI:58416"/>
        <label>3</label>
    </ligand>
</feature>
<feature type="binding site" description="axial binding residue" evidence="3">
    <location>
        <position position="151"/>
    </location>
    <ligand>
        <name>chlorophyll b</name>
        <dbReference type="ChEBI" id="CHEBI:61721"/>
        <label>2</label>
    </ligand>
    <ligandPart>
        <name>Mg</name>
        <dbReference type="ChEBI" id="CHEBI:25107"/>
    </ligandPart>
</feature>
<feature type="binding site" evidence="1">
    <location>
        <position position="155"/>
    </location>
    <ligand>
        <name>chlorophyll b</name>
        <dbReference type="ChEBI" id="CHEBI:61721"/>
        <label>3</label>
    </ligand>
</feature>
<feature type="binding site" evidence="1">
    <location>
        <position position="163"/>
    </location>
    <ligand>
        <name>chlorophyll b</name>
        <dbReference type="ChEBI" id="CHEBI:61721"/>
        <label>4</label>
    </ligand>
</feature>
<feature type="binding site" evidence="2">
    <location>
        <position position="163"/>
    </location>
    <ligand>
        <name>chlorophyll b</name>
        <dbReference type="ChEBI" id="CHEBI:61721"/>
        <label>5</label>
    </ligand>
</feature>
<feature type="binding site" description="axial binding residue" evidence="3">
    <location>
        <position position="171"/>
    </location>
    <ligand>
        <name>chlorophyll b</name>
        <dbReference type="ChEBI" id="CHEBI:61721"/>
        <label>3</label>
    </ligand>
    <ligandPart>
        <name>Mg</name>
        <dbReference type="ChEBI" id="CHEBI:25107"/>
    </ligandPart>
</feature>
<feature type="binding site" evidence="1">
    <location>
        <position position="174"/>
    </location>
    <ligand>
        <name>chlorophyll b</name>
        <dbReference type="ChEBI" id="CHEBI:61721"/>
        <label>4</label>
    </ligand>
</feature>
<feature type="binding site" evidence="1">
    <location>
        <position position="212"/>
    </location>
    <ligand>
        <name>chlorophyll a</name>
        <dbReference type="ChEBI" id="CHEBI:58416"/>
        <label>5</label>
    </ligand>
</feature>
<feature type="binding site" description="axial binding residue" evidence="3">
    <location>
        <position position="213"/>
    </location>
    <ligand>
        <name>chlorophyll a</name>
        <dbReference type="ChEBI" id="CHEBI:58416"/>
        <label>3</label>
    </ligand>
    <ligandPart>
        <name>Mg</name>
        <dbReference type="ChEBI" id="CHEBI:25107"/>
    </ligandPart>
</feature>
<feature type="binding site" description="axial binding residue" evidence="3">
    <location>
        <position position="216"/>
    </location>
    <ligand>
        <name>chlorophyll a</name>
        <dbReference type="ChEBI" id="CHEBI:58416"/>
        <label>4</label>
    </ligand>
    <ligandPart>
        <name>Mg</name>
        <dbReference type="ChEBI" id="CHEBI:25107"/>
    </ligandPart>
</feature>
<feature type="binding site" evidence="1">
    <location>
        <position position="218"/>
    </location>
    <ligand>
        <name>chlorophyll a</name>
        <dbReference type="ChEBI" id="CHEBI:58416"/>
        <label>1</label>
    </ligand>
</feature>
<feature type="binding site" description="axial binding residue" evidence="3">
    <location>
        <position position="230"/>
    </location>
    <ligand>
        <name>chlorophyll a</name>
        <dbReference type="ChEBI" id="CHEBI:58416"/>
        <label>5</label>
    </ligand>
    <ligandPart>
        <name>Mg</name>
        <dbReference type="ChEBI" id="CHEBI:25107"/>
    </ligandPart>
</feature>
<feature type="binding site" description="axial binding residue" evidence="3">
    <location>
        <position position="245"/>
    </location>
    <ligand>
        <name>chlorophyll a</name>
        <dbReference type="ChEBI" id="CHEBI:58416"/>
        <label>6</label>
    </ligand>
    <ligandPart>
        <name>Mg</name>
        <dbReference type="ChEBI" id="CHEBI:25107"/>
    </ligandPart>
</feature>
<feature type="binding site" evidence="1">
    <location>
        <position position="254"/>
    </location>
    <ligand>
        <name>chlorophyll a</name>
        <dbReference type="ChEBI" id="CHEBI:58416"/>
        <label>6</label>
    </ligand>
</feature>
<feature type="binding site" evidence="1">
    <location>
        <position position="261"/>
    </location>
    <ligand>
        <name>chlorophyll b</name>
        <dbReference type="ChEBI" id="CHEBI:61721"/>
        <label>5</label>
    </ligand>
</feature>
<protein>
    <recommendedName>
        <fullName>Chlorophyll a-b binding protein 13, chloroplastic</fullName>
    </recommendedName>
    <alternativeName>
        <fullName>LHCII type III CAB-13</fullName>
    </alternativeName>
</protein>
<reference key="1">
    <citation type="journal article" date="1991" name="Plant Mol. Biol.">
        <title>Sequence of a tomato gene encoding a third type of LHCII chlorophyll a/b-binding polypeptide.</title>
        <authorList>
            <person name="Schwartz E."/>
            <person name="Stasys R."/>
            <person name="Aebersold R."/>
            <person name="McGrath J.M."/>
            <person name="Green B.R."/>
            <person name="Pichersky E."/>
        </authorList>
    </citation>
    <scope>NUCLEOTIDE SEQUENCE [GENOMIC DNA]</scope>
    <scope>PROTEIN SEQUENCE OF 43-56</scope>
</reference>